<reference key="1">
    <citation type="journal article" date="1995" name="J. Cell Biol.">
        <title>Aspergillus nidulans apsA (anucleate primary sterigmata) encodes a coiled-coil protein required for nuclear positioning and completion of asexual development.</title>
        <authorList>
            <person name="Fischer R."/>
            <person name="Timberlake W.E."/>
        </authorList>
    </citation>
    <scope>NUCLEOTIDE SEQUENCE [GENOMIC DNA]</scope>
    <source>
        <strain>FGSC A4 / ATCC 38163 / CBS 112.46 / NRRL 194 / M139</strain>
    </source>
</reference>
<reference key="2">
    <citation type="journal article" date="2005" name="Nature">
        <title>Sequencing of Aspergillus nidulans and comparative analysis with A. fumigatus and A. oryzae.</title>
        <authorList>
            <person name="Galagan J.E."/>
            <person name="Calvo S.E."/>
            <person name="Cuomo C."/>
            <person name="Ma L.-J."/>
            <person name="Wortman J.R."/>
            <person name="Batzoglou S."/>
            <person name="Lee S.-I."/>
            <person name="Bastuerkmen M."/>
            <person name="Spevak C.C."/>
            <person name="Clutterbuck J."/>
            <person name="Kapitonov V."/>
            <person name="Jurka J."/>
            <person name="Scazzocchio C."/>
            <person name="Farman M.L."/>
            <person name="Butler J."/>
            <person name="Purcell S."/>
            <person name="Harris S."/>
            <person name="Braus G.H."/>
            <person name="Draht O."/>
            <person name="Busch S."/>
            <person name="D'Enfert C."/>
            <person name="Bouchier C."/>
            <person name="Goldman G.H."/>
            <person name="Bell-Pedersen D."/>
            <person name="Griffiths-Jones S."/>
            <person name="Doonan J.H."/>
            <person name="Yu J."/>
            <person name="Vienken K."/>
            <person name="Pain A."/>
            <person name="Freitag M."/>
            <person name="Selker E.U."/>
            <person name="Archer D.B."/>
            <person name="Penalva M.A."/>
            <person name="Oakley B.R."/>
            <person name="Momany M."/>
            <person name="Tanaka T."/>
            <person name="Kumagai T."/>
            <person name="Asai K."/>
            <person name="Machida M."/>
            <person name="Nierman W.C."/>
            <person name="Denning D.W."/>
            <person name="Caddick M.X."/>
            <person name="Hynes M."/>
            <person name="Paoletti M."/>
            <person name="Fischer R."/>
            <person name="Miller B.L."/>
            <person name="Dyer P.S."/>
            <person name="Sachs M.S."/>
            <person name="Osmani S.A."/>
            <person name="Birren B.W."/>
        </authorList>
    </citation>
    <scope>NUCLEOTIDE SEQUENCE [LARGE SCALE GENOMIC DNA]</scope>
    <source>
        <strain>FGSC A4 / ATCC 38163 / CBS 112.46 / NRRL 194 / M139</strain>
    </source>
</reference>
<reference key="3">
    <citation type="journal article" date="2009" name="Fungal Genet. Biol.">
        <title>The 2008 update of the Aspergillus nidulans genome annotation: a community effort.</title>
        <authorList>
            <person name="Wortman J.R."/>
            <person name="Gilsenan J.M."/>
            <person name="Joardar V."/>
            <person name="Deegan J."/>
            <person name="Clutterbuck J."/>
            <person name="Andersen M.R."/>
            <person name="Archer D."/>
            <person name="Bencina M."/>
            <person name="Braus G."/>
            <person name="Coutinho P."/>
            <person name="von Dohren H."/>
            <person name="Doonan J."/>
            <person name="Driessen A.J."/>
            <person name="Durek P."/>
            <person name="Espeso E."/>
            <person name="Fekete E."/>
            <person name="Flipphi M."/>
            <person name="Estrada C.G."/>
            <person name="Geysens S."/>
            <person name="Goldman G."/>
            <person name="de Groot P.W."/>
            <person name="Hansen K."/>
            <person name="Harris S.D."/>
            <person name="Heinekamp T."/>
            <person name="Helmstaedt K."/>
            <person name="Henrissat B."/>
            <person name="Hofmann G."/>
            <person name="Homan T."/>
            <person name="Horio T."/>
            <person name="Horiuchi H."/>
            <person name="James S."/>
            <person name="Jones M."/>
            <person name="Karaffa L."/>
            <person name="Karanyi Z."/>
            <person name="Kato M."/>
            <person name="Keller N."/>
            <person name="Kelly D.E."/>
            <person name="Kiel J.A."/>
            <person name="Kim J.M."/>
            <person name="van der Klei I.J."/>
            <person name="Klis F.M."/>
            <person name="Kovalchuk A."/>
            <person name="Krasevec N."/>
            <person name="Kubicek C.P."/>
            <person name="Liu B."/>
            <person name="Maccabe A."/>
            <person name="Meyer V."/>
            <person name="Mirabito P."/>
            <person name="Miskei M."/>
            <person name="Mos M."/>
            <person name="Mullins J."/>
            <person name="Nelson D.R."/>
            <person name="Nielsen J."/>
            <person name="Oakley B.R."/>
            <person name="Osmani S.A."/>
            <person name="Pakula T."/>
            <person name="Paszewski A."/>
            <person name="Paulsen I."/>
            <person name="Pilsyk S."/>
            <person name="Pocsi I."/>
            <person name="Punt P.J."/>
            <person name="Ram A.F."/>
            <person name="Ren Q."/>
            <person name="Robellet X."/>
            <person name="Robson G."/>
            <person name="Seiboth B."/>
            <person name="van Solingen P."/>
            <person name="Specht T."/>
            <person name="Sun J."/>
            <person name="Taheri-Talesh N."/>
            <person name="Takeshita N."/>
            <person name="Ussery D."/>
            <person name="vanKuyk P.A."/>
            <person name="Visser H."/>
            <person name="van de Vondervoort P.J."/>
            <person name="de Vries R.P."/>
            <person name="Walton J."/>
            <person name="Xiang X."/>
            <person name="Xiong Y."/>
            <person name="Zeng A.P."/>
            <person name="Brandt B.W."/>
            <person name="Cornell M.J."/>
            <person name="van den Hondel C.A."/>
            <person name="Visser J."/>
            <person name="Oliver S.G."/>
            <person name="Turner G."/>
        </authorList>
    </citation>
    <scope>GENOME REANNOTATION</scope>
    <source>
        <strain>FGSC A4 / ATCC 38163 / CBS 112.46 / NRRL 194 / M139</strain>
    </source>
</reference>
<reference key="4">
    <citation type="journal article" date="1997" name="Mol. Microbiol.">
        <title>Nuclear traffic in fungal hyphae: in vivo study of nuclear migration and positioning in Aspergillus nidulans.</title>
        <authorList>
            <person name="Suelmann R."/>
            <person name="Sievers N."/>
            <person name="Fischer R."/>
        </authorList>
    </citation>
    <scope>CHARACTERIZATION</scope>
</reference>
<organism>
    <name type="scientific">Emericella nidulans (strain FGSC A4 / ATCC 38163 / CBS 112.46 / NRRL 194 / M139)</name>
    <name type="common">Aspergillus nidulans</name>
    <dbReference type="NCBI Taxonomy" id="227321"/>
    <lineage>
        <taxon>Eukaryota</taxon>
        <taxon>Fungi</taxon>
        <taxon>Dikarya</taxon>
        <taxon>Ascomycota</taxon>
        <taxon>Pezizomycotina</taxon>
        <taxon>Eurotiomycetes</taxon>
        <taxon>Eurotiomycetidae</taxon>
        <taxon>Eurotiales</taxon>
        <taxon>Aspergillaceae</taxon>
        <taxon>Aspergillus</taxon>
        <taxon>Aspergillus subgen. Nidulantes</taxon>
    </lineage>
</organism>
<sequence>MEDSQRGNASMMSMMDDPFVVSPEGARDPPSTNQYSTFDAQLFNLDASTPAQAKRALEAHLAETERRLEEASKLGTALVEQRKDLEDKLREVEQQQEEGQIGEELRRKLADLEREYNEIGQETARAFLAPKRLAGGDDGHLGTPSMDQKSPLHSALFAGQATNSPSKVSVPSRKSRNQSNRVHDIEFATEISTSLLAQVRQLQSLLAEREETLKTVNLEKSRLELEAEGYAQRIRALDESEERYKDENWALETKIHELMAAVKDVTDRETKLTSSLGAATAEKSAMERELEDLKQANAKLIEDHTAAQKANDAEINTLRRNLSAGDAERLTLQRKLEDMNTQNQELAKAVAMRLRQQEAESTREVVRPHDSEDEEQATPENSPPPSPNKFTPRHNHLETETLRSSLGHAHRMIQNLRSTIHREKTEKIELKRMLQEARDEVEQRRRDSVAANGPTNKRQKTKAETRKPARPDLLGAGRKKAEVEIHDSDWESNAGDISPTHKASNDSRDRRGDQPIDDRSDAYHTATEADDPFETANERETTTESEAFQTGVESMAGDSTDSDELTETEDRVQRTPRGRVSSMTLAKARDRTSYYSTASTSADEGDSTDPGTPSISQFSTPRYRLRKKRSVLRKIRPSGEAPMAFNSRPSSARESPSTSFTRDTSAAPEGQSLFAELAEVDGDEDDFGPPMQFEAASPSTPRMLPGFDSRRPSAVTVELPSKPDMVDSGVMTDPWEPNLHLASQTDDETVISVPVTPDKPTMSDASTGMDVVESPSLVHSSTQWTPLKPNAETSDDHVLSVPTPPKMAWDGQTLNEERKVDIPDSPTTQRELNISSVSFEETEPVAPSFPELRTAFFVGSTTEPVAAPVPVPPEVALSPISSQTTQPTEPVIPAPPEPEPIYVPEMAFSQILVEDTLPILAKLPEPAPERVFAEQGTSTDIAELSVSAISSEQTEPVEPVYEPKQDVAIVAEAVPEGPLSFVEQGTNTDDVEISFPAISSVETEPVAPVRETKDDVPEPVLSLTEQGTSTDTVEFSVSSISSEETEPVEPIREAKEEAAAVDDVASESTHPVLSIFLTPPAYTEPTAPKLQEAVIPPAPQLALSTVSSVETPPVQYTPDVLILPTPPALDENTPPSVMASTAKATKSAPPLVVVDDNTDKGTADGLVTQQNGVTLPLGAISGNAAPRRARSGSSNQADQGAQTILSSKQIDQLLIDRASVRPLSPPDSDKLNEMSNSPFATPKARSRPVPQASNASLHKRPGSAASQASSVQIHPPLPADHKEAIMAAEKKSIDQRPASAGLMGPPLAPASAVRASSQQRPRTPNESALQVGSAKTTTSRASVRRDSHMSRRSSVSSFASELEERFNMQPNPPFAPQGYSTGTDPRMIQAITQTMIGEFLWKYTRRAVSGEISNTRHRRYFWVHPYTRTLYWSEHDPQSAGKSEGRTKSVSIEAVRVVADDNPYPPGLHCKSLEVVSPGRRIRFTATTSQRHETWFNALSYLLVRNGPEDEEAENGVTLDDIDEFNPGFRSRSRQTARMSVSSSQSRGTRGLPKQRSGSAMSLRPSVTPGRASPYPPSHYSDQARQASSSRLSTIFNSTIKGSFGRKGPYAASSLNEDSIHNHDDSVEDLRHMMDRGDDVDRLENVRACCDGKHDVSSLSRTSRYSPRANRIHSHH</sequence>
<keyword id="KW-0175">Coiled coil</keyword>
<keyword id="KW-0472">Membrane</keyword>
<keyword id="KW-1185">Reference proteome</keyword>
<name>APSA_EMENI</name>
<gene>
    <name type="primary">apsA</name>
    <name type="ORF">AN7757</name>
</gene>
<protein>
    <recommendedName>
        <fullName>Anucleate primary sterigmata protein A</fullName>
    </recommendedName>
</protein>
<dbReference type="EMBL" id="X82289">
    <property type="protein sequence ID" value="CAA57733.1"/>
    <property type="molecule type" value="Genomic_DNA"/>
</dbReference>
<dbReference type="EMBL" id="AACD01000132">
    <property type="protein sequence ID" value="EAA61545.1"/>
    <property type="molecule type" value="Genomic_DNA"/>
</dbReference>
<dbReference type="EMBL" id="BN001304">
    <property type="protein sequence ID" value="CBF80046.1"/>
    <property type="molecule type" value="Genomic_DNA"/>
</dbReference>
<dbReference type="PIR" id="A56508">
    <property type="entry name" value="A56508"/>
</dbReference>
<dbReference type="RefSeq" id="XP_681026.1">
    <property type="nucleotide sequence ID" value="XM_675934.1"/>
</dbReference>
<dbReference type="SMR" id="Q00083"/>
<dbReference type="STRING" id="227321.Q00083"/>
<dbReference type="EnsemblFungi" id="CBF80046">
    <property type="protein sequence ID" value="CBF80046"/>
    <property type="gene ID" value="ANIA_07757"/>
</dbReference>
<dbReference type="GeneID" id="2869470"/>
<dbReference type="KEGG" id="ani:ANIA_07757"/>
<dbReference type="VEuPathDB" id="FungiDB:AN7757"/>
<dbReference type="eggNOG" id="ENOG502QWQU">
    <property type="taxonomic scope" value="Eukaryota"/>
</dbReference>
<dbReference type="HOGENOM" id="CLU_001023_0_0_1"/>
<dbReference type="InParanoid" id="Q00083"/>
<dbReference type="OMA" id="LHHAHRM"/>
<dbReference type="OrthoDB" id="2149224at2759"/>
<dbReference type="Proteomes" id="UP000000560">
    <property type="component" value="Chromosome IV"/>
</dbReference>
<dbReference type="GO" id="GO:0005938">
    <property type="term" value="C:cell cortex"/>
    <property type="evidence" value="ECO:0000250"/>
    <property type="project" value="AspGD"/>
</dbReference>
<dbReference type="GO" id="GO:0005886">
    <property type="term" value="C:plasma membrane"/>
    <property type="evidence" value="ECO:0000314"/>
    <property type="project" value="AspGD"/>
</dbReference>
<dbReference type="GO" id="GO:0005543">
    <property type="term" value="F:phospholipid binding"/>
    <property type="evidence" value="ECO:0007669"/>
    <property type="project" value="InterPro"/>
</dbReference>
<dbReference type="GO" id="GO:0015631">
    <property type="term" value="F:tubulin binding"/>
    <property type="evidence" value="ECO:0000318"/>
    <property type="project" value="GO_Central"/>
</dbReference>
<dbReference type="GO" id="GO:0048315">
    <property type="term" value="P:conidium formation"/>
    <property type="evidence" value="ECO:0000315"/>
    <property type="project" value="AspGD"/>
</dbReference>
<dbReference type="GO" id="GO:0032065">
    <property type="term" value="P:maintenance of protein location in cell cortex"/>
    <property type="evidence" value="ECO:0007669"/>
    <property type="project" value="InterPro"/>
</dbReference>
<dbReference type="GO" id="GO:0000226">
    <property type="term" value="P:microtubule cytoskeleton organization"/>
    <property type="evidence" value="ECO:0000315"/>
    <property type="project" value="AspGD"/>
</dbReference>
<dbReference type="GO" id="GO:0007097">
    <property type="term" value="P:nuclear migration"/>
    <property type="evidence" value="ECO:0000315"/>
    <property type="project" value="AspGD"/>
</dbReference>
<dbReference type="GO" id="GO:0051647">
    <property type="term" value="P:nucleus localization"/>
    <property type="evidence" value="ECO:0000315"/>
    <property type="project" value="AspGD"/>
</dbReference>
<dbReference type="CDD" id="cd13365">
    <property type="entry name" value="PH_PLC_plant-like"/>
    <property type="match status" value="1"/>
</dbReference>
<dbReference type="InterPro" id="IPR053005">
    <property type="entry name" value="Nuclear_Pos-Cytoskel_Interact"/>
</dbReference>
<dbReference type="InterPro" id="IPR024774">
    <property type="entry name" value="PH_dom-Mcp5-type"/>
</dbReference>
<dbReference type="InterPro" id="IPR001849">
    <property type="entry name" value="PH_domain"/>
</dbReference>
<dbReference type="PANTHER" id="PTHR28190">
    <property type="entry name" value="NUCLEAR MIGRATION PROTEIN NUM1"/>
    <property type="match status" value="1"/>
</dbReference>
<dbReference type="PANTHER" id="PTHR28190:SF1">
    <property type="entry name" value="NUCLEAR MIGRATION PROTEIN NUM1"/>
    <property type="match status" value="1"/>
</dbReference>
<dbReference type="Pfam" id="PF12814">
    <property type="entry name" value="Mcp5_PH"/>
    <property type="match status" value="1"/>
</dbReference>
<dbReference type="SMART" id="SM00233">
    <property type="entry name" value="PH"/>
    <property type="match status" value="1"/>
</dbReference>
<dbReference type="SUPFAM" id="SSF50729">
    <property type="entry name" value="PH domain-like"/>
    <property type="match status" value="1"/>
</dbReference>
<dbReference type="PROSITE" id="PS50003">
    <property type="entry name" value="PH_DOMAIN"/>
    <property type="match status" value="1"/>
</dbReference>
<evidence type="ECO:0000255" key="1"/>
<evidence type="ECO:0000255" key="2">
    <source>
        <dbReference type="PROSITE-ProRule" id="PRU00145"/>
    </source>
</evidence>
<evidence type="ECO:0000256" key="3">
    <source>
        <dbReference type="SAM" id="MobiDB-lite"/>
    </source>
</evidence>
<evidence type="ECO:0000305" key="4"/>
<proteinExistence type="evidence at protein level"/>
<accession>Q00083</accession>
<accession>C8VDM5</accession>
<accession>Q5AVC3</accession>
<feature type="chain" id="PRO_0000064645" description="Anucleate primary sterigmata protein A">
    <location>
        <begin position="1"/>
        <end position="1676"/>
    </location>
</feature>
<feature type="domain" description="PH" evidence="2">
    <location>
        <begin position="1393"/>
        <end position="1504"/>
    </location>
</feature>
<feature type="region of interest" description="Disordered" evidence="3">
    <location>
        <begin position="1"/>
        <end position="35"/>
    </location>
</feature>
<feature type="region of interest" description="Disordered" evidence="3">
    <location>
        <begin position="160"/>
        <end position="180"/>
    </location>
</feature>
<feature type="region of interest" description="Disordered" evidence="3">
    <location>
        <begin position="353"/>
        <end position="394"/>
    </location>
</feature>
<feature type="region of interest" description="Disordered" evidence="3">
    <location>
        <begin position="439"/>
        <end position="712"/>
    </location>
</feature>
<feature type="region of interest" description="Disordered" evidence="3">
    <location>
        <begin position="1027"/>
        <end position="1050"/>
    </location>
</feature>
<feature type="region of interest" description="Disordered" evidence="3">
    <location>
        <begin position="1176"/>
        <end position="1201"/>
    </location>
</feature>
<feature type="region of interest" description="Disordered" evidence="3">
    <location>
        <begin position="1220"/>
        <end position="1270"/>
    </location>
</feature>
<feature type="region of interest" description="Disordered" evidence="3">
    <location>
        <begin position="1297"/>
        <end position="1354"/>
    </location>
</feature>
<feature type="region of interest" description="Disordered" evidence="3">
    <location>
        <begin position="1511"/>
        <end position="1589"/>
    </location>
</feature>
<feature type="region of interest" description="Disordered" evidence="3">
    <location>
        <begin position="1654"/>
        <end position="1676"/>
    </location>
</feature>
<feature type="coiled-coil region" evidence="1">
    <location>
        <begin position="51"/>
        <end position="127"/>
    </location>
</feature>
<feature type="coiled-coil region" evidence="1">
    <location>
        <begin position="193"/>
        <end position="359"/>
    </location>
</feature>
<feature type="coiled-coil region" evidence="1">
    <location>
        <begin position="408"/>
        <end position="453"/>
    </location>
</feature>
<feature type="compositionally biased region" description="Polar residues" evidence="3">
    <location>
        <begin position="1"/>
        <end position="11"/>
    </location>
</feature>
<feature type="compositionally biased region" description="Low complexity" evidence="3">
    <location>
        <begin position="163"/>
        <end position="172"/>
    </location>
</feature>
<feature type="compositionally biased region" description="Basic and acidic residues" evidence="3">
    <location>
        <begin position="355"/>
        <end position="370"/>
    </location>
</feature>
<feature type="compositionally biased region" description="Basic and acidic residues" evidence="3">
    <location>
        <begin position="439"/>
        <end position="448"/>
    </location>
</feature>
<feature type="compositionally biased region" description="Basic and acidic residues" evidence="3">
    <location>
        <begin position="461"/>
        <end position="470"/>
    </location>
</feature>
<feature type="compositionally biased region" description="Basic and acidic residues" evidence="3">
    <location>
        <begin position="479"/>
        <end position="489"/>
    </location>
</feature>
<feature type="compositionally biased region" description="Basic and acidic residues" evidence="3">
    <location>
        <begin position="503"/>
        <end position="522"/>
    </location>
</feature>
<feature type="compositionally biased region" description="Low complexity" evidence="3">
    <location>
        <begin position="593"/>
        <end position="602"/>
    </location>
</feature>
<feature type="compositionally biased region" description="Polar residues" evidence="3">
    <location>
        <begin position="609"/>
        <end position="620"/>
    </location>
</feature>
<feature type="compositionally biased region" description="Basic residues" evidence="3">
    <location>
        <begin position="623"/>
        <end position="636"/>
    </location>
</feature>
<feature type="compositionally biased region" description="Polar residues" evidence="3">
    <location>
        <begin position="647"/>
        <end position="664"/>
    </location>
</feature>
<feature type="compositionally biased region" description="Acidic residues" evidence="3">
    <location>
        <begin position="678"/>
        <end position="687"/>
    </location>
</feature>
<feature type="compositionally biased region" description="Low complexity" evidence="3">
    <location>
        <begin position="1032"/>
        <end position="1042"/>
    </location>
</feature>
<feature type="compositionally biased region" description="Polar residues" evidence="3">
    <location>
        <begin position="1191"/>
        <end position="1201"/>
    </location>
</feature>
<feature type="compositionally biased region" description="Polar residues" evidence="3">
    <location>
        <begin position="1314"/>
        <end position="1341"/>
    </location>
</feature>
<feature type="compositionally biased region" description="Acidic residues" evidence="3">
    <location>
        <begin position="1511"/>
        <end position="1524"/>
    </location>
</feature>
<feature type="compositionally biased region" description="Polar residues" evidence="3">
    <location>
        <begin position="1534"/>
        <end position="1548"/>
    </location>
</feature>
<feature type="compositionally biased region" description="Polar residues" evidence="3">
    <location>
        <begin position="1580"/>
        <end position="1589"/>
    </location>
</feature>
<feature type="sequence conflict" description="In Ref. 1; CAA57733." evidence="4" ref="1">
    <original>S</original>
    <variation>T</variation>
    <location>
        <position position="593"/>
    </location>
</feature>
<feature type="sequence conflict" description="In Ref. 1; CAA57733." evidence="4" ref="1">
    <original>EL</original>
    <variation>DV</variation>
    <location>
        <begin position="943"/>
        <end position="944"/>
    </location>
</feature>
<comment type="function">
    <text>Required for nuclear positioning and completion of asexual development.</text>
</comment>
<comment type="subcellular location">
    <subcellularLocation>
        <location>Membrane</location>
        <topology>Peripheral membrane protein</topology>
    </subcellularLocation>
</comment>